<proteinExistence type="evidence at protein level"/>
<accession>P15705</accession>
<accession>D6W293</accession>
<comment type="function">
    <text>May play a role in mediating the heat shock response of some HSP70 genes. It is required for optimal growth of yeast cells at both low and high temperature.</text>
</comment>
<comment type="subunit">
    <text>Part of a larger complex that includes HSP70, HSP90, and immunophilins.</text>
</comment>
<comment type="interaction">
    <interactant intactId="EBI-18418">
        <id>P15705</id>
    </interactant>
    <interactant intactId="EBI-8666">
        <id>P15108</id>
        <label>HSC82</label>
    </interactant>
    <organismsDiffer>false</organismsDiffer>
    <experiments>4</experiments>
</comment>
<comment type="interaction">
    <interactant intactId="EBI-18418">
        <id>P15705</id>
    </interactant>
    <interactant intactId="EBI-8659">
        <id>P02829</id>
        <label>HSP82</label>
    </interactant>
    <organismsDiffer>false</organismsDiffer>
    <experiments>19</experiments>
</comment>
<comment type="subcellular location">
    <subcellularLocation>
        <location evidence="2">Cytoplasm</location>
    </subcellularLocation>
</comment>
<comment type="induction">
    <text>By heat shock and canavanine.</text>
</comment>
<comment type="PTM">
    <text evidence="4">N-glycosylated.</text>
</comment>
<comment type="miscellaneous">
    <text evidence="3">Present with 67600 molecules/cell in log phase SD medium.</text>
</comment>
<keyword id="KW-0002">3D-structure</keyword>
<keyword id="KW-0963">Cytoplasm</keyword>
<keyword id="KW-0903">Direct protein sequencing</keyword>
<keyword id="KW-0325">Glycoprotein</keyword>
<keyword id="KW-1017">Isopeptide bond</keyword>
<keyword id="KW-0597">Phosphoprotein</keyword>
<keyword id="KW-1185">Reference proteome</keyword>
<keyword id="KW-0677">Repeat</keyword>
<keyword id="KW-0346">Stress response</keyword>
<keyword id="KW-0802">TPR repeat</keyword>
<keyword id="KW-0832">Ubl conjugation</keyword>
<protein>
    <recommendedName>
        <fullName>Heat shock protein STI1</fullName>
    </recommendedName>
</protein>
<sequence>MSLTADEYKQQGNAAFTAKDYDKAIELFTKAIEVSETPNHVLYSNRSACYTSLKKFSDALNDANECVKINPSWSKGYNRLGAAHLGLGDLDEAESNYKKALELDASNKAAKEGLDQVHRTQQARQAQPDLGLTQLFADPNLIENLKKNPKTSEMMKDPQLVAKLIGYKQNPQAIGQDLFTDPRLMTIMATLMGVDLNMDDINQSNSMPKEPETSKSTEQKKDAEPQSDSTTSKENSSKAPQKEESKESEPMEVDEDDSKIEADKEKAEGNKFYKARQFDEAIEHYNKAWELHKDITYLNNRAAAEYEKGEYETAISTLNDAVEQGREMRADYKVISKSFARIGNAYHKLGDLKKTIEYYQKSLTEHRTADILTKLRNAEKELKKAEAEAYVNPEKAEEARLEGKEYFTKSDWPNAVKAYTEMIKRAPEDARGYSNRAAALAKLMSFPEAIADCNKAIEKDPNFVRAYIRKATAQIAVKEYASALETLDAARTKDAEVNNGSSAREIDQLYYKASQQRFQPGTSNETPEETYQRAMKDPEVAAIMQDPVMQSILQQAQQNPAALQEHMKNPEVFKKIQTLIAAGIIRTGR</sequence>
<gene>
    <name type="primary">STI1</name>
    <name type="ordered locus">YOR027W</name>
    <name type="ORF">OR26.17</name>
</gene>
<evidence type="ECO:0000256" key="1">
    <source>
        <dbReference type="SAM" id="MobiDB-lite"/>
    </source>
</evidence>
<evidence type="ECO:0000269" key="2">
    <source>
    </source>
</evidence>
<evidence type="ECO:0000269" key="3">
    <source>
    </source>
</evidence>
<evidence type="ECO:0000269" key="4">
    <source>
    </source>
</evidence>
<evidence type="ECO:0007744" key="5">
    <source>
    </source>
</evidence>
<evidence type="ECO:0007744" key="6">
    <source>
    </source>
</evidence>
<evidence type="ECO:0007829" key="7">
    <source>
        <dbReference type="PDB" id="2LLV"/>
    </source>
</evidence>
<evidence type="ECO:0007829" key="8">
    <source>
        <dbReference type="PDB" id="2LLW"/>
    </source>
</evidence>
<evidence type="ECO:0007829" key="9">
    <source>
        <dbReference type="PDB" id="3UPV"/>
    </source>
</evidence>
<evidence type="ECO:0007829" key="10">
    <source>
        <dbReference type="PDB" id="3UQ3"/>
    </source>
</evidence>
<feature type="chain" id="PRO_0000106341" description="Heat shock protein STI1">
    <location>
        <begin position="1"/>
        <end position="589"/>
    </location>
</feature>
<feature type="repeat" description="TPR 1">
    <location>
        <begin position="5"/>
        <end position="38"/>
    </location>
</feature>
<feature type="repeat" description="TPR 2">
    <location>
        <begin position="40"/>
        <end position="73"/>
    </location>
</feature>
<feature type="repeat" description="TPR 3">
    <location>
        <begin position="74"/>
        <end position="107"/>
    </location>
</feature>
<feature type="domain" description="STI1 1">
    <location>
        <begin position="138"/>
        <end position="177"/>
    </location>
</feature>
<feature type="repeat" description="TPR 4">
    <location>
        <begin position="262"/>
        <end position="295"/>
    </location>
</feature>
<feature type="repeat" description="TPR 5">
    <location>
        <begin position="297"/>
        <end position="328"/>
    </location>
</feature>
<feature type="repeat" description="TPR 6">
    <location>
        <begin position="336"/>
        <end position="369"/>
    </location>
</feature>
<feature type="repeat" description="TPR 7">
    <location>
        <begin position="396"/>
        <end position="429"/>
    </location>
</feature>
<feature type="repeat" description="TPR 8">
    <location>
        <begin position="430"/>
        <end position="463"/>
    </location>
</feature>
<feature type="repeat" description="TPR 9">
    <location>
        <begin position="465"/>
        <end position="492"/>
    </location>
</feature>
<feature type="domain" description="STI1 2">
    <location>
        <begin position="537"/>
        <end position="576"/>
    </location>
</feature>
<feature type="region of interest" description="Disordered" evidence="1">
    <location>
        <begin position="199"/>
        <end position="265"/>
    </location>
</feature>
<feature type="compositionally biased region" description="Basic and acidic residues" evidence="1">
    <location>
        <begin position="209"/>
        <end position="224"/>
    </location>
</feature>
<feature type="compositionally biased region" description="Polar residues" evidence="1">
    <location>
        <begin position="226"/>
        <end position="239"/>
    </location>
</feature>
<feature type="compositionally biased region" description="Basic and acidic residues" evidence="1">
    <location>
        <begin position="240"/>
        <end position="249"/>
    </location>
</feature>
<feature type="modified residue" description="Phosphoserine" evidence="5">
    <location>
        <position position="227"/>
    </location>
</feature>
<feature type="cross-link" description="Glycyl lysine isopeptide (Lys-Gly) (interchain with G-Cter in ubiquitin)" evidence="6">
    <location>
        <position position="99"/>
    </location>
</feature>
<feature type="cross-link" description="Glycyl lysine isopeptide (Lys-Gly) (interchain with G-Cter in ubiquitin)" evidence="6">
    <location>
        <position position="168"/>
    </location>
</feature>
<feature type="cross-link" description="Glycyl lysine isopeptide (Lys-Gly) (interchain with G-Cter in ubiquitin)" evidence="6">
    <location>
        <position position="384"/>
    </location>
</feature>
<feature type="helix" evidence="7">
    <location>
        <begin position="133"/>
        <end position="137"/>
    </location>
</feature>
<feature type="strand" evidence="7">
    <location>
        <begin position="138"/>
        <end position="140"/>
    </location>
</feature>
<feature type="helix" evidence="7">
    <location>
        <begin position="142"/>
        <end position="147"/>
    </location>
</feature>
<feature type="helix" evidence="7">
    <location>
        <begin position="152"/>
        <end position="156"/>
    </location>
</feature>
<feature type="helix" evidence="7">
    <location>
        <begin position="160"/>
        <end position="169"/>
    </location>
</feature>
<feature type="helix" evidence="7">
    <location>
        <begin position="174"/>
        <end position="177"/>
    </location>
</feature>
<feature type="turn" evidence="7">
    <location>
        <begin position="178"/>
        <end position="180"/>
    </location>
</feature>
<feature type="helix" evidence="7">
    <location>
        <begin position="182"/>
        <end position="192"/>
    </location>
</feature>
<feature type="turn" evidence="7">
    <location>
        <begin position="193"/>
        <end position="196"/>
    </location>
</feature>
<feature type="helix" evidence="10">
    <location>
        <begin position="262"/>
        <end position="274"/>
    </location>
</feature>
<feature type="helix" evidence="10">
    <location>
        <begin position="278"/>
        <end position="291"/>
    </location>
</feature>
<feature type="helix" evidence="10">
    <location>
        <begin position="296"/>
        <end position="307"/>
    </location>
</feature>
<feature type="helix" evidence="10">
    <location>
        <begin position="311"/>
        <end position="327"/>
    </location>
</feature>
<feature type="helix" evidence="10">
    <location>
        <begin position="332"/>
        <end position="348"/>
    </location>
</feature>
<feature type="helix" evidence="10">
    <location>
        <begin position="352"/>
        <end position="365"/>
    </location>
</feature>
<feature type="helix" evidence="10">
    <location>
        <begin position="369"/>
        <end position="390"/>
    </location>
</feature>
<feature type="helix" evidence="9">
    <location>
        <begin position="395"/>
        <end position="408"/>
    </location>
</feature>
<feature type="helix" evidence="9">
    <location>
        <begin position="412"/>
        <end position="425"/>
    </location>
</feature>
<feature type="helix" evidence="9">
    <location>
        <begin position="430"/>
        <end position="442"/>
    </location>
</feature>
<feature type="helix" evidence="9">
    <location>
        <begin position="446"/>
        <end position="459"/>
    </location>
</feature>
<feature type="helix" evidence="9">
    <location>
        <begin position="464"/>
        <end position="476"/>
    </location>
</feature>
<feature type="helix" evidence="9">
    <location>
        <begin position="480"/>
        <end position="498"/>
    </location>
</feature>
<feature type="turn" evidence="9">
    <location>
        <begin position="499"/>
        <end position="502"/>
    </location>
</feature>
<feature type="helix" evidence="9">
    <location>
        <begin position="503"/>
        <end position="516"/>
    </location>
</feature>
<feature type="helix" evidence="8">
    <location>
        <begin position="527"/>
        <end position="536"/>
    </location>
</feature>
<feature type="helix" evidence="8">
    <location>
        <begin position="538"/>
        <end position="544"/>
    </location>
</feature>
<feature type="helix" evidence="8">
    <location>
        <begin position="548"/>
        <end position="558"/>
    </location>
</feature>
<feature type="helix" evidence="8">
    <location>
        <begin position="560"/>
        <end position="568"/>
    </location>
</feature>
<feature type="helix" evidence="8">
    <location>
        <begin position="570"/>
        <end position="581"/>
    </location>
</feature>
<reference key="1">
    <citation type="journal article" date="1989" name="Mol. Cell. Biol.">
        <title>Isolation and characterization of STI1, a stress-inducible gene from Saccharomyces cerevisiae.</title>
        <authorList>
            <person name="Nicolet C.M."/>
            <person name="Craig E.A."/>
        </authorList>
    </citation>
    <scope>NUCLEOTIDE SEQUENCE [GENOMIC DNA]</scope>
</reference>
<reference key="2">
    <citation type="journal article" date="1990" name="Cell">
        <title>Snap helix with knob and hole: essential repeats in S. pombe nuclear protein nuc2+.</title>
        <authorList>
            <person name="Hirano T."/>
            <person name="Kinoshita N."/>
            <person name="Morikawa K."/>
            <person name="Yanagida M."/>
        </authorList>
    </citation>
    <scope>NUCLEOTIDE SEQUENCE [GENOMIC DNA]</scope>
</reference>
<reference key="3">
    <citation type="journal article" date="1997" name="Nature">
        <title>The nucleotide sequence of Saccharomyces cerevisiae chromosome XV.</title>
        <authorList>
            <person name="Dujon B."/>
            <person name="Albermann K."/>
            <person name="Aldea M."/>
            <person name="Alexandraki D."/>
            <person name="Ansorge W."/>
            <person name="Arino J."/>
            <person name="Benes V."/>
            <person name="Bohn C."/>
            <person name="Bolotin-Fukuhara M."/>
            <person name="Bordonne R."/>
            <person name="Boyer J."/>
            <person name="Camasses A."/>
            <person name="Casamayor A."/>
            <person name="Casas C."/>
            <person name="Cheret G."/>
            <person name="Cziepluch C."/>
            <person name="Daignan-Fornier B."/>
            <person name="Dang V.-D."/>
            <person name="de Haan M."/>
            <person name="Delius H."/>
            <person name="Durand P."/>
            <person name="Fairhead C."/>
            <person name="Feldmann H."/>
            <person name="Gaillon L."/>
            <person name="Galisson F."/>
            <person name="Gamo F.-J."/>
            <person name="Gancedo C."/>
            <person name="Goffeau A."/>
            <person name="Goulding S.E."/>
            <person name="Grivell L.A."/>
            <person name="Habbig B."/>
            <person name="Hand N.J."/>
            <person name="Hani J."/>
            <person name="Hattenhorst U."/>
            <person name="Hebling U."/>
            <person name="Hernando Y."/>
            <person name="Herrero E."/>
            <person name="Heumann K."/>
            <person name="Hiesel R."/>
            <person name="Hilger F."/>
            <person name="Hofmann B."/>
            <person name="Hollenberg C.P."/>
            <person name="Hughes B."/>
            <person name="Jauniaux J.-C."/>
            <person name="Kalogeropoulos A."/>
            <person name="Katsoulou C."/>
            <person name="Kordes E."/>
            <person name="Lafuente M.J."/>
            <person name="Landt O."/>
            <person name="Louis E.J."/>
            <person name="Maarse A.C."/>
            <person name="Madania A."/>
            <person name="Mannhaupt G."/>
            <person name="Marck C."/>
            <person name="Martin R.P."/>
            <person name="Mewes H.-W."/>
            <person name="Michaux G."/>
            <person name="Paces V."/>
            <person name="Parle-McDermott A.G."/>
            <person name="Pearson B.M."/>
            <person name="Perrin A."/>
            <person name="Pettersson B."/>
            <person name="Poch O."/>
            <person name="Pohl T.M."/>
            <person name="Poirey R."/>
            <person name="Portetelle D."/>
            <person name="Pujol A."/>
            <person name="Purnelle B."/>
            <person name="Ramezani Rad M."/>
            <person name="Rechmann S."/>
            <person name="Schwager C."/>
            <person name="Schweizer M."/>
            <person name="Sor F."/>
            <person name="Sterky F."/>
            <person name="Tarassov I.A."/>
            <person name="Teodoru C."/>
            <person name="Tettelin H."/>
            <person name="Thierry A."/>
            <person name="Tobiasch E."/>
            <person name="Tzermia M."/>
            <person name="Uhlen M."/>
            <person name="Unseld M."/>
            <person name="Valens M."/>
            <person name="Vandenbol M."/>
            <person name="Vetter I."/>
            <person name="Vlcek C."/>
            <person name="Voet M."/>
            <person name="Volckaert G."/>
            <person name="Voss H."/>
            <person name="Wambutt R."/>
            <person name="Wedler H."/>
            <person name="Wiemann S."/>
            <person name="Winsor B."/>
            <person name="Wolfe K.H."/>
            <person name="Zollner A."/>
            <person name="Zumstein E."/>
            <person name="Kleine K."/>
        </authorList>
    </citation>
    <scope>NUCLEOTIDE SEQUENCE [LARGE SCALE GENOMIC DNA]</scope>
    <source>
        <strain>ATCC 204508 / S288c</strain>
    </source>
</reference>
<reference key="4">
    <citation type="journal article" date="2014" name="G3 (Bethesda)">
        <title>The reference genome sequence of Saccharomyces cerevisiae: Then and now.</title>
        <authorList>
            <person name="Engel S.R."/>
            <person name="Dietrich F.S."/>
            <person name="Fisk D.G."/>
            <person name="Binkley G."/>
            <person name="Balakrishnan R."/>
            <person name="Costanzo M.C."/>
            <person name="Dwight S.S."/>
            <person name="Hitz B.C."/>
            <person name="Karra K."/>
            <person name="Nash R.S."/>
            <person name="Weng S."/>
            <person name="Wong E.D."/>
            <person name="Lloyd P."/>
            <person name="Skrzypek M.S."/>
            <person name="Miyasato S.R."/>
            <person name="Simison M."/>
            <person name="Cherry J.M."/>
        </authorList>
    </citation>
    <scope>GENOME REANNOTATION</scope>
    <source>
        <strain>ATCC 204508 / S288c</strain>
    </source>
</reference>
<reference key="5">
    <citation type="journal article" date="1994" name="Electrophoresis">
        <title>Protein identifications for a Saccharomyces cerevisiae protein database.</title>
        <authorList>
            <person name="Garrels J.I."/>
            <person name="Futcher B."/>
            <person name="Kobayashi R."/>
            <person name="Latter G.I."/>
            <person name="Schwender B."/>
            <person name="Volpe T."/>
            <person name="Warner J.R."/>
            <person name="McLaughlin C.S."/>
        </authorList>
    </citation>
    <scope>PROTEIN SEQUENCE OF 76-93</scope>
    <source>
        <strain>ATCC 204508 / S288c</strain>
    </source>
</reference>
<reference key="6">
    <citation type="journal article" date="1990" name="Nature">
        <title>Expanding family.</title>
        <authorList>
            <person name="Boguski M.S."/>
            <person name="Sikorski R.S."/>
            <person name="Hieter P.A."/>
            <person name="Goebl M."/>
        </authorList>
    </citation>
    <scope>DOMAINS TPR REPEATS</scope>
</reference>
<reference key="7">
    <citation type="journal article" date="1993" name="Mol. Cell. Biol.">
        <title>Identification of a 60-kilodalton stress-related protein, p60, which interacts with hsp90 and hsp70.</title>
        <authorList>
            <person name="Smith D.F."/>
            <person name="Sullivan W.P."/>
            <person name="Marion T.N."/>
            <person name="Zaitsu K."/>
            <person name="Madden B."/>
            <person name="McCormick D.J."/>
            <person name="Toft D.O."/>
        </authorList>
    </citation>
    <scope>CHARACTERIZATION</scope>
</reference>
<reference key="8">
    <citation type="journal article" date="2003" name="Nature">
        <title>Global analysis of protein localization in budding yeast.</title>
        <authorList>
            <person name="Huh W.-K."/>
            <person name="Falvo J.V."/>
            <person name="Gerke L.C."/>
            <person name="Carroll A.S."/>
            <person name="Howson R.W."/>
            <person name="Weissman J.S."/>
            <person name="O'Shea E.K."/>
        </authorList>
    </citation>
    <scope>SUBCELLULAR LOCATION [LARGE SCALE ANALYSIS]</scope>
</reference>
<reference key="9">
    <citation type="journal article" date="2003" name="Nature">
        <title>Global analysis of protein expression in yeast.</title>
        <authorList>
            <person name="Ghaemmaghami S."/>
            <person name="Huh W.-K."/>
            <person name="Bower K."/>
            <person name="Howson R.W."/>
            <person name="Belle A."/>
            <person name="Dephoure N."/>
            <person name="O'Shea E.K."/>
            <person name="Weissman J.S."/>
        </authorList>
    </citation>
    <scope>LEVEL OF PROTEIN EXPRESSION [LARGE SCALE ANALYSIS]</scope>
</reference>
<reference key="10">
    <citation type="journal article" date="2008" name="Mol. Cell. Proteomics">
        <title>A multidimensional chromatography technology for in-depth phosphoproteome analysis.</title>
        <authorList>
            <person name="Albuquerque C.P."/>
            <person name="Smolka M.B."/>
            <person name="Payne S.H."/>
            <person name="Bafna V."/>
            <person name="Eng J."/>
            <person name="Zhou H."/>
        </authorList>
    </citation>
    <scope>PHOSPHORYLATION [LARGE SCALE ANALYSIS] AT SER-227</scope>
    <scope>IDENTIFICATION BY MASS SPECTROMETRY [LARGE SCALE ANALYSIS]</scope>
</reference>
<reference key="11">
    <citation type="journal article" date="2009" name="Mol. Syst. Biol.">
        <title>Global analysis of the glycoproteome in Saccharomyces cerevisiae reveals new roles for protein glycosylation in eukaryotes.</title>
        <authorList>
            <person name="Kung L.A."/>
            <person name="Tao S.-C."/>
            <person name="Qian J."/>
            <person name="Smith M.G."/>
            <person name="Snyder M."/>
            <person name="Zhu H."/>
        </authorList>
    </citation>
    <scope>GLYCOSYLATION [LARGE SCALE ANALYSIS]</scope>
</reference>
<reference key="12">
    <citation type="journal article" date="2012" name="Proteomics">
        <title>Sites of ubiquitin attachment in Saccharomyces cerevisiae.</title>
        <authorList>
            <person name="Starita L.M."/>
            <person name="Lo R.S."/>
            <person name="Eng J.K."/>
            <person name="von Haller P.D."/>
            <person name="Fields S."/>
        </authorList>
    </citation>
    <scope>UBIQUITINATION [LARGE SCALE ANALYSIS] AT LYS-99; LYS-168 AND LYS-384</scope>
    <scope>IDENTIFICATION BY MASS SPECTROMETRY [LARGE SCALE ANALYSIS]</scope>
</reference>
<dbReference type="EMBL" id="M28486">
    <property type="protein sequence ID" value="AAA35121.1"/>
    <property type="molecule type" value="Genomic_DNA"/>
</dbReference>
<dbReference type="EMBL" id="X87331">
    <property type="protein sequence ID" value="CAA60743.1"/>
    <property type="molecule type" value="Genomic_DNA"/>
</dbReference>
<dbReference type="EMBL" id="Z74935">
    <property type="protein sequence ID" value="CAA99217.1"/>
    <property type="molecule type" value="Genomic_DNA"/>
</dbReference>
<dbReference type="EMBL" id="BK006948">
    <property type="protein sequence ID" value="DAA10809.1"/>
    <property type="molecule type" value="Genomic_DNA"/>
</dbReference>
<dbReference type="PIR" id="A32567">
    <property type="entry name" value="A32567"/>
</dbReference>
<dbReference type="RefSeq" id="NP_014670.1">
    <property type="nucleotide sequence ID" value="NM_001183446.1"/>
</dbReference>
<dbReference type="PDB" id="2LLV">
    <property type="method" value="NMR"/>
    <property type="chains" value="A=127-197"/>
</dbReference>
<dbReference type="PDB" id="2LLW">
    <property type="method" value="NMR"/>
    <property type="chains" value="A=519-589"/>
</dbReference>
<dbReference type="PDB" id="3UPV">
    <property type="method" value="X-ray"/>
    <property type="resolution" value="1.60 A"/>
    <property type="chains" value="A=395-518"/>
</dbReference>
<dbReference type="PDB" id="3UQ3">
    <property type="method" value="X-ray"/>
    <property type="resolution" value="2.60 A"/>
    <property type="chains" value="A=262-515"/>
</dbReference>
<dbReference type="PDBsum" id="2LLV"/>
<dbReference type="PDBsum" id="2LLW"/>
<dbReference type="PDBsum" id="3UPV"/>
<dbReference type="PDBsum" id="3UQ3"/>
<dbReference type="BMRB" id="P15705"/>
<dbReference type="SMR" id="P15705"/>
<dbReference type="BioGRID" id="34430">
    <property type="interactions" value="360"/>
</dbReference>
<dbReference type="DIP" id="DIP-2329N"/>
<dbReference type="FunCoup" id="P15705">
    <property type="interactions" value="1267"/>
</dbReference>
<dbReference type="IntAct" id="P15705">
    <property type="interactions" value="51"/>
</dbReference>
<dbReference type="MINT" id="P15705"/>
<dbReference type="STRING" id="4932.YOR027W"/>
<dbReference type="GlyGen" id="P15705">
    <property type="glycosylation" value="5 sites, 1 O-linked glycan (5 sites)"/>
</dbReference>
<dbReference type="iPTMnet" id="P15705"/>
<dbReference type="PaxDb" id="4932-YOR027W"/>
<dbReference type="PeptideAtlas" id="P15705"/>
<dbReference type="EnsemblFungi" id="YOR027W_mRNA">
    <property type="protein sequence ID" value="YOR027W"/>
    <property type="gene ID" value="YOR027W"/>
</dbReference>
<dbReference type="GeneID" id="854192"/>
<dbReference type="KEGG" id="sce:YOR027W"/>
<dbReference type="AGR" id="SGD:S000005553"/>
<dbReference type="SGD" id="S000005553">
    <property type="gene designation" value="STI1"/>
</dbReference>
<dbReference type="VEuPathDB" id="FungiDB:YOR027W"/>
<dbReference type="eggNOG" id="KOG0548">
    <property type="taxonomic scope" value="Eukaryota"/>
</dbReference>
<dbReference type="GeneTree" id="ENSGT00940000170181"/>
<dbReference type="HOGENOM" id="CLU_000134_46_5_1"/>
<dbReference type="InParanoid" id="P15705"/>
<dbReference type="OMA" id="MYSAREN"/>
<dbReference type="OrthoDB" id="2423701at2759"/>
<dbReference type="BioCyc" id="YEAST:G3O-33574-MONOMER"/>
<dbReference type="Reactome" id="R-SCE-3371497">
    <property type="pathway name" value="HSP90 chaperone cycle for steroid hormone receptors (SHR) in the presence of ligand"/>
</dbReference>
<dbReference type="Reactome" id="R-SCE-9696273">
    <property type="pathway name" value="RND1 GTPase cycle"/>
</dbReference>
<dbReference type="BioGRID-ORCS" id="854192">
    <property type="hits" value="9 hits in 10 CRISPR screens"/>
</dbReference>
<dbReference type="CD-CODE" id="E03F929F">
    <property type="entry name" value="Stress granule"/>
</dbReference>
<dbReference type="EvolutionaryTrace" id="P15705"/>
<dbReference type="PRO" id="PR:P15705"/>
<dbReference type="Proteomes" id="UP000002311">
    <property type="component" value="Chromosome XV"/>
</dbReference>
<dbReference type="RNAct" id="P15705">
    <property type="molecule type" value="protein"/>
</dbReference>
<dbReference type="GO" id="GO:0005737">
    <property type="term" value="C:cytoplasm"/>
    <property type="evidence" value="ECO:0000314"/>
    <property type="project" value="SGD"/>
</dbReference>
<dbReference type="GO" id="GO:0042030">
    <property type="term" value="F:ATPase inhibitor activity"/>
    <property type="evidence" value="ECO:0000314"/>
    <property type="project" value="SGD"/>
</dbReference>
<dbReference type="GO" id="GO:0030544">
    <property type="term" value="F:Hsp70 protein binding"/>
    <property type="evidence" value="ECO:0000314"/>
    <property type="project" value="SGD"/>
</dbReference>
<dbReference type="GO" id="GO:0051879">
    <property type="term" value="F:Hsp90 protein binding"/>
    <property type="evidence" value="ECO:0000314"/>
    <property type="project" value="SGD"/>
</dbReference>
<dbReference type="GO" id="GO:0003729">
    <property type="term" value="F:mRNA binding"/>
    <property type="evidence" value="ECO:0000314"/>
    <property type="project" value="SGD"/>
</dbReference>
<dbReference type="GO" id="GO:0006457">
    <property type="term" value="P:protein folding"/>
    <property type="evidence" value="ECO:0000315"/>
    <property type="project" value="SGD"/>
</dbReference>
<dbReference type="GO" id="GO:0008104">
    <property type="term" value="P:protein localization"/>
    <property type="evidence" value="ECO:0000315"/>
    <property type="project" value="SGD"/>
</dbReference>
<dbReference type="GO" id="GO:0006626">
    <property type="term" value="P:protein targeting to mitochondrion"/>
    <property type="evidence" value="ECO:0000315"/>
    <property type="project" value="SGD"/>
</dbReference>
<dbReference type="FunFam" id="1.10.260.100:FF:000004">
    <property type="entry name" value="Putative stress-induced-phosphoprotein 1"/>
    <property type="match status" value="1"/>
</dbReference>
<dbReference type="FunFam" id="1.25.40.10:FF:000010">
    <property type="entry name" value="Stress-induced phosphoprotein 1"/>
    <property type="match status" value="1"/>
</dbReference>
<dbReference type="FunFam" id="1.25.40.10:FF:000020">
    <property type="entry name" value="Stress-induced phosphoprotein 1"/>
    <property type="match status" value="1"/>
</dbReference>
<dbReference type="FunFam" id="1.10.260.100:FF:000002">
    <property type="entry name" value="Stress-induced-phosphoprotein 1 (Hsp70/Hsp90-organizing)"/>
    <property type="match status" value="1"/>
</dbReference>
<dbReference type="FunFam" id="1.25.40.10:FF:000027">
    <property type="entry name" value="stress-induced-phosphoprotein 1 isoform X1"/>
    <property type="match status" value="1"/>
</dbReference>
<dbReference type="Gene3D" id="1.10.260.100">
    <property type="match status" value="2"/>
</dbReference>
<dbReference type="Gene3D" id="1.25.40.10">
    <property type="entry name" value="Tetratricopeptide repeat domain"/>
    <property type="match status" value="3"/>
</dbReference>
<dbReference type="IDEAL" id="IID50201"/>
<dbReference type="InterPro" id="IPR041243">
    <property type="entry name" value="STI1/HOP_DP"/>
</dbReference>
<dbReference type="InterPro" id="IPR006636">
    <property type="entry name" value="STI1_HS-bd"/>
</dbReference>
<dbReference type="InterPro" id="IPR011990">
    <property type="entry name" value="TPR-like_helical_dom_sf"/>
</dbReference>
<dbReference type="InterPro" id="IPR019734">
    <property type="entry name" value="TPR_rpt"/>
</dbReference>
<dbReference type="PANTHER" id="PTHR22904:SF523">
    <property type="entry name" value="STRESS-INDUCED-PHOSPHOPROTEIN 1"/>
    <property type="match status" value="1"/>
</dbReference>
<dbReference type="PANTHER" id="PTHR22904">
    <property type="entry name" value="TPR REPEAT CONTAINING PROTEIN"/>
    <property type="match status" value="1"/>
</dbReference>
<dbReference type="Pfam" id="PF17830">
    <property type="entry name" value="STI1-HOP_DP"/>
    <property type="match status" value="2"/>
</dbReference>
<dbReference type="Pfam" id="PF00515">
    <property type="entry name" value="TPR_1"/>
    <property type="match status" value="2"/>
</dbReference>
<dbReference type="Pfam" id="PF13432">
    <property type="entry name" value="TPR_16"/>
    <property type="match status" value="1"/>
</dbReference>
<dbReference type="Pfam" id="PF13181">
    <property type="entry name" value="TPR_8"/>
    <property type="match status" value="2"/>
</dbReference>
<dbReference type="SMART" id="SM00727">
    <property type="entry name" value="STI1"/>
    <property type="match status" value="2"/>
</dbReference>
<dbReference type="SMART" id="SM00028">
    <property type="entry name" value="TPR"/>
    <property type="match status" value="9"/>
</dbReference>
<dbReference type="SUPFAM" id="SSF48452">
    <property type="entry name" value="TPR-like"/>
    <property type="match status" value="3"/>
</dbReference>
<dbReference type="PROSITE" id="PS50005">
    <property type="entry name" value="TPR"/>
    <property type="match status" value="7"/>
</dbReference>
<dbReference type="PROSITE" id="PS50293">
    <property type="entry name" value="TPR_REGION"/>
    <property type="match status" value="4"/>
</dbReference>
<name>STI1_YEAST</name>
<organism>
    <name type="scientific">Saccharomyces cerevisiae (strain ATCC 204508 / S288c)</name>
    <name type="common">Baker's yeast</name>
    <dbReference type="NCBI Taxonomy" id="559292"/>
    <lineage>
        <taxon>Eukaryota</taxon>
        <taxon>Fungi</taxon>
        <taxon>Dikarya</taxon>
        <taxon>Ascomycota</taxon>
        <taxon>Saccharomycotina</taxon>
        <taxon>Saccharomycetes</taxon>
        <taxon>Saccharomycetales</taxon>
        <taxon>Saccharomycetaceae</taxon>
        <taxon>Saccharomyces</taxon>
    </lineage>
</organism>